<dbReference type="EMBL" id="CP000880">
    <property type="protein sequence ID" value="ABX23581.1"/>
    <property type="molecule type" value="Genomic_DNA"/>
</dbReference>
<dbReference type="SMR" id="A9MJS1"/>
<dbReference type="STRING" id="41514.SARI_03787"/>
<dbReference type="KEGG" id="ses:SARI_03787"/>
<dbReference type="HOGENOM" id="CLU_084338_2_0_6"/>
<dbReference type="Proteomes" id="UP000002084">
    <property type="component" value="Chromosome"/>
</dbReference>
<dbReference type="GO" id="GO:0005886">
    <property type="term" value="C:plasma membrane"/>
    <property type="evidence" value="ECO:0007669"/>
    <property type="project" value="UniProtKB-SubCell"/>
</dbReference>
<dbReference type="GO" id="GO:0045259">
    <property type="term" value="C:proton-transporting ATP synthase complex"/>
    <property type="evidence" value="ECO:0007669"/>
    <property type="project" value="UniProtKB-KW"/>
</dbReference>
<dbReference type="GO" id="GO:0005524">
    <property type="term" value="F:ATP binding"/>
    <property type="evidence" value="ECO:0007669"/>
    <property type="project" value="UniProtKB-UniRule"/>
</dbReference>
<dbReference type="GO" id="GO:0046933">
    <property type="term" value="F:proton-transporting ATP synthase activity, rotational mechanism"/>
    <property type="evidence" value="ECO:0007669"/>
    <property type="project" value="UniProtKB-UniRule"/>
</dbReference>
<dbReference type="CDD" id="cd12152">
    <property type="entry name" value="F1-ATPase_delta"/>
    <property type="match status" value="1"/>
</dbReference>
<dbReference type="FunFam" id="1.20.5.440:FF:000001">
    <property type="entry name" value="ATP synthase epsilon chain"/>
    <property type="match status" value="1"/>
</dbReference>
<dbReference type="FunFam" id="2.60.15.10:FF:000001">
    <property type="entry name" value="ATP synthase epsilon chain"/>
    <property type="match status" value="1"/>
</dbReference>
<dbReference type="Gene3D" id="1.20.5.440">
    <property type="entry name" value="ATP synthase delta/epsilon subunit, C-terminal domain"/>
    <property type="match status" value="1"/>
</dbReference>
<dbReference type="Gene3D" id="2.60.15.10">
    <property type="entry name" value="F0F1 ATP synthase delta/epsilon subunit, N-terminal"/>
    <property type="match status" value="1"/>
</dbReference>
<dbReference type="HAMAP" id="MF_00530">
    <property type="entry name" value="ATP_synth_epsil_bac"/>
    <property type="match status" value="1"/>
</dbReference>
<dbReference type="InterPro" id="IPR036794">
    <property type="entry name" value="ATP_F1_dsu/esu_C_sf"/>
</dbReference>
<dbReference type="InterPro" id="IPR001469">
    <property type="entry name" value="ATP_synth_F1_dsu/esu"/>
</dbReference>
<dbReference type="InterPro" id="IPR020546">
    <property type="entry name" value="ATP_synth_F1_dsu/esu_N"/>
</dbReference>
<dbReference type="InterPro" id="IPR020547">
    <property type="entry name" value="ATP_synth_F1_esu_C"/>
</dbReference>
<dbReference type="InterPro" id="IPR036771">
    <property type="entry name" value="ATPsynth_dsu/esu_N"/>
</dbReference>
<dbReference type="NCBIfam" id="TIGR01216">
    <property type="entry name" value="ATP_synt_epsi"/>
    <property type="match status" value="1"/>
</dbReference>
<dbReference type="NCBIfam" id="NF001847">
    <property type="entry name" value="PRK00571.1-4"/>
    <property type="match status" value="1"/>
</dbReference>
<dbReference type="PANTHER" id="PTHR13822">
    <property type="entry name" value="ATP SYNTHASE DELTA/EPSILON CHAIN"/>
    <property type="match status" value="1"/>
</dbReference>
<dbReference type="PANTHER" id="PTHR13822:SF10">
    <property type="entry name" value="ATP SYNTHASE EPSILON CHAIN, CHLOROPLASTIC"/>
    <property type="match status" value="1"/>
</dbReference>
<dbReference type="Pfam" id="PF00401">
    <property type="entry name" value="ATP-synt_DE"/>
    <property type="match status" value="1"/>
</dbReference>
<dbReference type="Pfam" id="PF02823">
    <property type="entry name" value="ATP-synt_DE_N"/>
    <property type="match status" value="1"/>
</dbReference>
<dbReference type="SUPFAM" id="SSF46604">
    <property type="entry name" value="Epsilon subunit of F1F0-ATP synthase C-terminal domain"/>
    <property type="match status" value="1"/>
</dbReference>
<dbReference type="SUPFAM" id="SSF51344">
    <property type="entry name" value="Epsilon subunit of F1F0-ATP synthase N-terminal domain"/>
    <property type="match status" value="1"/>
</dbReference>
<protein>
    <recommendedName>
        <fullName evidence="1">ATP synthase epsilon chain</fullName>
    </recommendedName>
    <alternativeName>
        <fullName evidence="1">ATP synthase F1 sector epsilon subunit</fullName>
    </alternativeName>
    <alternativeName>
        <fullName evidence="1">F-ATPase epsilon subunit</fullName>
    </alternativeName>
</protein>
<organism>
    <name type="scientific">Salmonella arizonae (strain ATCC BAA-731 / CDC346-86 / RSK2980)</name>
    <dbReference type="NCBI Taxonomy" id="41514"/>
    <lineage>
        <taxon>Bacteria</taxon>
        <taxon>Pseudomonadati</taxon>
        <taxon>Pseudomonadota</taxon>
        <taxon>Gammaproteobacteria</taxon>
        <taxon>Enterobacterales</taxon>
        <taxon>Enterobacteriaceae</taxon>
        <taxon>Salmonella</taxon>
    </lineage>
</organism>
<comment type="function">
    <text evidence="1">Produces ATP from ADP in the presence of a proton gradient across the membrane.</text>
</comment>
<comment type="subunit">
    <text evidence="1">F-type ATPases have 2 components, CF(1) - the catalytic core - and CF(0) - the membrane proton channel. CF(1) has five subunits: alpha(3), beta(3), gamma(1), delta(1), epsilon(1). CF(0) has three main subunits: a, b and c.</text>
</comment>
<comment type="subcellular location">
    <subcellularLocation>
        <location evidence="1">Cell inner membrane</location>
        <topology evidence="1">Peripheral membrane protein</topology>
    </subcellularLocation>
</comment>
<comment type="similarity">
    <text evidence="1">Belongs to the ATPase epsilon chain family.</text>
</comment>
<name>ATPE_SALAR</name>
<sequence length="139" mass="15078">MAMTYHLDVVSAEQQMFSGLVEKIQVTGSEGELGIYPGHAPLLTAIKPGMIRIVKQHGHEEFIYLSGGILEVQPGTVTVLADTAIRGQDLDEARALEAKRKAEEHIKSSHGDVDYAQASAELAKAIAKLRVIELTKKAM</sequence>
<gene>
    <name evidence="1" type="primary">atpC</name>
    <name type="ordered locus">SARI_03787</name>
</gene>
<keyword id="KW-0066">ATP synthesis</keyword>
<keyword id="KW-0997">Cell inner membrane</keyword>
<keyword id="KW-1003">Cell membrane</keyword>
<keyword id="KW-0139">CF(1)</keyword>
<keyword id="KW-0375">Hydrogen ion transport</keyword>
<keyword id="KW-0406">Ion transport</keyword>
<keyword id="KW-0472">Membrane</keyword>
<keyword id="KW-1185">Reference proteome</keyword>
<keyword id="KW-0813">Transport</keyword>
<reference key="1">
    <citation type="submission" date="2007-11" db="EMBL/GenBank/DDBJ databases">
        <authorList>
            <consortium name="The Salmonella enterica serovar Arizonae Genome Sequencing Project"/>
            <person name="McClelland M."/>
            <person name="Sanderson E.K."/>
            <person name="Porwollik S."/>
            <person name="Spieth J."/>
            <person name="Clifton W.S."/>
            <person name="Fulton R."/>
            <person name="Chunyan W."/>
            <person name="Wollam A."/>
            <person name="Shah N."/>
            <person name="Pepin K."/>
            <person name="Bhonagiri V."/>
            <person name="Nash W."/>
            <person name="Johnson M."/>
            <person name="Thiruvilangam P."/>
            <person name="Wilson R."/>
        </authorList>
    </citation>
    <scope>NUCLEOTIDE SEQUENCE [LARGE SCALE GENOMIC DNA]</scope>
    <source>
        <strain>ATCC BAA-731 / CDC346-86 / RSK2980</strain>
    </source>
</reference>
<feature type="chain" id="PRO_1000081743" description="ATP synthase epsilon chain">
    <location>
        <begin position="1"/>
        <end position="139"/>
    </location>
</feature>
<proteinExistence type="inferred from homology"/>
<accession>A9MJS1</accession>
<evidence type="ECO:0000255" key="1">
    <source>
        <dbReference type="HAMAP-Rule" id="MF_00530"/>
    </source>
</evidence>